<dbReference type="EMBL" id="CP000745">
    <property type="protein sequence ID" value="ABR66363.1"/>
    <property type="molecule type" value="Genomic_DNA"/>
</dbReference>
<dbReference type="SMR" id="A6VIT7"/>
<dbReference type="STRING" id="426368.MmarC7_1300"/>
<dbReference type="KEGG" id="mmz:MmarC7_1300"/>
<dbReference type="eggNOG" id="arCOG01640">
    <property type="taxonomic scope" value="Archaea"/>
</dbReference>
<dbReference type="HOGENOM" id="CLU_026663_3_1_2"/>
<dbReference type="OrthoDB" id="38099at2157"/>
<dbReference type="GO" id="GO:0003743">
    <property type="term" value="F:translation initiation factor activity"/>
    <property type="evidence" value="ECO:0007669"/>
    <property type="project" value="UniProtKB-UniRule"/>
</dbReference>
<dbReference type="FunFam" id="3.30.30.170:FF:000001">
    <property type="entry name" value="Eukaryotic translation initiation factor 2 subunit"/>
    <property type="match status" value="1"/>
</dbReference>
<dbReference type="Gene3D" id="3.30.30.170">
    <property type="match status" value="1"/>
</dbReference>
<dbReference type="HAMAP" id="MF_00232">
    <property type="entry name" value="eIF_2_beta"/>
    <property type="match status" value="1"/>
</dbReference>
<dbReference type="InterPro" id="IPR045196">
    <property type="entry name" value="IF2/IF5"/>
</dbReference>
<dbReference type="InterPro" id="IPR004458">
    <property type="entry name" value="TIF2_bsu_arc"/>
</dbReference>
<dbReference type="InterPro" id="IPR002735">
    <property type="entry name" value="Transl_init_fac_IF2/IF5_dom"/>
</dbReference>
<dbReference type="InterPro" id="IPR016189">
    <property type="entry name" value="Transl_init_fac_IF2/IF5_N"/>
</dbReference>
<dbReference type="InterPro" id="IPR016190">
    <property type="entry name" value="Transl_init_fac_IF2/IF5_Zn-bd"/>
</dbReference>
<dbReference type="NCBIfam" id="TIGR00311">
    <property type="entry name" value="aIF-2beta"/>
    <property type="match status" value="1"/>
</dbReference>
<dbReference type="NCBIfam" id="NF003067">
    <property type="entry name" value="PRK03988.1"/>
    <property type="match status" value="1"/>
</dbReference>
<dbReference type="PANTHER" id="PTHR23001">
    <property type="entry name" value="EUKARYOTIC TRANSLATION INITIATION FACTOR"/>
    <property type="match status" value="1"/>
</dbReference>
<dbReference type="PANTHER" id="PTHR23001:SF3">
    <property type="entry name" value="EUKARYOTIC TRANSLATION INITIATION FACTOR 2 SUBUNIT 2"/>
    <property type="match status" value="1"/>
</dbReference>
<dbReference type="Pfam" id="PF01873">
    <property type="entry name" value="eIF-5_eIF-2B"/>
    <property type="match status" value="1"/>
</dbReference>
<dbReference type="SMART" id="SM00653">
    <property type="entry name" value="eIF2B_5"/>
    <property type="match status" value="1"/>
</dbReference>
<dbReference type="SUPFAM" id="SSF100966">
    <property type="entry name" value="Translation initiation factor 2 beta, aIF2beta, N-terminal domain"/>
    <property type="match status" value="1"/>
</dbReference>
<dbReference type="SUPFAM" id="SSF75689">
    <property type="entry name" value="Zinc-binding domain of translation initiation factor 2 beta"/>
    <property type="match status" value="1"/>
</dbReference>
<organism>
    <name type="scientific">Methanococcus maripaludis (strain C7 / ATCC BAA-1331)</name>
    <dbReference type="NCBI Taxonomy" id="426368"/>
    <lineage>
        <taxon>Archaea</taxon>
        <taxon>Methanobacteriati</taxon>
        <taxon>Methanobacteriota</taxon>
        <taxon>Methanomada group</taxon>
        <taxon>Methanococci</taxon>
        <taxon>Methanococcales</taxon>
        <taxon>Methanococcaceae</taxon>
        <taxon>Methanococcus</taxon>
    </lineage>
</organism>
<evidence type="ECO:0000255" key="1">
    <source>
        <dbReference type="HAMAP-Rule" id="MF_00232"/>
    </source>
</evidence>
<proteinExistence type="inferred from homology"/>
<gene>
    <name evidence="1" type="primary">eif2b</name>
    <name type="ordered locus">MmarC7_1300</name>
</gene>
<name>IF2B_METM7</name>
<protein>
    <recommendedName>
        <fullName evidence="1">Translation initiation factor 2 subunit beta</fullName>
    </recommendedName>
    <alternativeName>
        <fullName evidence="1">aIF2-beta</fullName>
    </alternativeName>
    <alternativeName>
        <fullName evidence="1">eIF-2-beta</fullName>
    </alternativeName>
</protein>
<feature type="chain" id="PRO_1000021651" description="Translation initiation factor 2 subunit beta">
    <location>
        <begin position="1"/>
        <end position="138"/>
    </location>
</feature>
<accession>A6VIT7</accession>
<comment type="function">
    <text evidence="1">eIF-2 functions in the early steps of protein synthesis by forming a ternary complex with GTP and initiator tRNA.</text>
</comment>
<comment type="subunit">
    <text evidence="1">Heterotrimer composed of an alpha, a beta and a gamma chain.</text>
</comment>
<comment type="similarity">
    <text evidence="1">Belongs to the eIF-2-beta/eIF-5 family.</text>
</comment>
<reference key="1">
    <citation type="submission" date="2007-06" db="EMBL/GenBank/DDBJ databases">
        <title>Complete sequence of Methanococcus maripaludis C7.</title>
        <authorList>
            <consortium name="US DOE Joint Genome Institute"/>
            <person name="Copeland A."/>
            <person name="Lucas S."/>
            <person name="Lapidus A."/>
            <person name="Barry K."/>
            <person name="Glavina del Rio T."/>
            <person name="Dalin E."/>
            <person name="Tice H."/>
            <person name="Pitluck S."/>
            <person name="Clum A."/>
            <person name="Schmutz J."/>
            <person name="Larimer F."/>
            <person name="Land M."/>
            <person name="Hauser L."/>
            <person name="Kyrpides N."/>
            <person name="Anderson I."/>
            <person name="Sieprawska-Lupa M."/>
            <person name="Whitman W.B."/>
            <person name="Richardson P."/>
        </authorList>
    </citation>
    <scope>NUCLEOTIDE SEQUENCE [LARGE SCALE GENOMIC DNA]</scope>
    <source>
        <strain>C7 / ATCC BAA-1331</strain>
    </source>
</reference>
<sequence>MVDYFDYNSLLTRAREQLPEEVFKDVRFEIPSADSFVEGNRTIIKNFKDIAKFMERDPQEFAKYVMKELGTAGDMEGVRLILQGKFGWRMVNEKIQNYVNEYVLCPECGKPDTKIVKEGRIHFLKCTACGAMKPVKTL</sequence>
<keyword id="KW-0396">Initiation factor</keyword>
<keyword id="KW-0648">Protein biosynthesis</keyword>